<accession>A9MUW2</accession>
<gene>
    <name evidence="1" type="primary">dlgD</name>
    <name type="ordered locus">SPAB_04559</name>
</gene>
<protein>
    <recommendedName>
        <fullName evidence="1">2,3-diketo-L-gulonate reductase</fullName>
        <shortName evidence="1">2,3-DKG reductase</shortName>
        <ecNumber evidence="1">1.1.1.130</ecNumber>
    </recommendedName>
    <alternativeName>
        <fullName evidence="1">3-dehydro-L-gulonate 2-dehydrogenase</fullName>
    </alternativeName>
</protein>
<evidence type="ECO:0000255" key="1">
    <source>
        <dbReference type="HAMAP-Rule" id="MF_00820"/>
    </source>
</evidence>
<keyword id="KW-0963">Cytoplasm</keyword>
<keyword id="KW-0520">NAD</keyword>
<keyword id="KW-0560">Oxidoreductase</keyword>
<organism>
    <name type="scientific">Salmonella paratyphi B (strain ATCC BAA-1250 / SPB7)</name>
    <dbReference type="NCBI Taxonomy" id="1016998"/>
    <lineage>
        <taxon>Bacteria</taxon>
        <taxon>Pseudomonadati</taxon>
        <taxon>Pseudomonadota</taxon>
        <taxon>Gammaproteobacteria</taxon>
        <taxon>Enterobacterales</taxon>
        <taxon>Enterobacteriaceae</taxon>
        <taxon>Salmonella</taxon>
    </lineage>
</organism>
<name>DLGD_SALPB</name>
<comment type="function">
    <text evidence="1">Catalyzes the reduction of 2,3-diketo-L-gulonate in the presence of NADH, to form 3-keto-L-gulonate.</text>
</comment>
<comment type="catalytic activity">
    <reaction evidence="1">
        <text>3-dehydro-L-gulonate + NAD(+) = 2,3-dioxo-L-gulonate + NADH + H(+)</text>
        <dbReference type="Rhea" id="RHEA:21924"/>
        <dbReference type="ChEBI" id="CHEBI:15378"/>
        <dbReference type="ChEBI" id="CHEBI:57441"/>
        <dbReference type="ChEBI" id="CHEBI:57540"/>
        <dbReference type="ChEBI" id="CHEBI:57655"/>
        <dbReference type="ChEBI" id="CHEBI:57945"/>
        <dbReference type="EC" id="1.1.1.130"/>
    </reaction>
</comment>
<comment type="catalytic activity">
    <reaction evidence="1">
        <text>3-dehydro-L-gulonate + NADP(+) = 2,3-dioxo-L-gulonate + NADPH + H(+)</text>
        <dbReference type="Rhea" id="RHEA:21928"/>
        <dbReference type="ChEBI" id="CHEBI:15378"/>
        <dbReference type="ChEBI" id="CHEBI:57441"/>
        <dbReference type="ChEBI" id="CHEBI:57655"/>
        <dbReference type="ChEBI" id="CHEBI:57783"/>
        <dbReference type="ChEBI" id="CHEBI:58349"/>
        <dbReference type="EC" id="1.1.1.130"/>
    </reaction>
</comment>
<comment type="subunit">
    <text evidence="1">Homodimer.</text>
</comment>
<comment type="subcellular location">
    <subcellularLocation>
        <location evidence="1">Cytoplasm</location>
    </subcellularLocation>
</comment>
<comment type="similarity">
    <text evidence="1">Belongs to the LDH2/MDH2 oxidoreductase family. DlgD subfamily.</text>
</comment>
<proteinExistence type="inferred from homology"/>
<reference key="1">
    <citation type="submission" date="2007-11" db="EMBL/GenBank/DDBJ databases">
        <authorList>
            <consortium name="The Salmonella enterica serovar Paratyphi B Genome Sequencing Project"/>
            <person name="McClelland M."/>
            <person name="Sanderson E.K."/>
            <person name="Porwollik S."/>
            <person name="Spieth J."/>
            <person name="Clifton W.S."/>
            <person name="Fulton R."/>
            <person name="Cordes M."/>
            <person name="Wollam A."/>
            <person name="Shah N."/>
            <person name="Pepin K."/>
            <person name="Bhonagiri V."/>
            <person name="Nash W."/>
            <person name="Johnson M."/>
            <person name="Thiruvilangam P."/>
            <person name="Wilson R."/>
        </authorList>
    </citation>
    <scope>NUCLEOTIDE SEQUENCE [LARGE SCALE GENOMIC DNA]</scope>
    <source>
        <strain>ATCC BAA-1250 / SPB7</strain>
    </source>
</reference>
<sequence length="332" mass="36771">MKVTFEELKGAFYRVLRSRNIAEDTADECAEMFARTTESGVYSHGVNRFPRFIQQLDNGDIIPDAKPQRVTSLGAIEQWDAKRAIGNLTAKKMMDRAIELASDHGIGLVALRNANHWMRGGSYGWQAAEKGYIGICWTNSIAVMPPWGAKECRIGTNPLIVAIPSTPITMVDMSMSMFSYGMLEVNRLAGRELPVDGGFDDNGQLTKEPGVIEKNRRILPMGYWKGSGLSIVLDMIATLLSNGSSVAEVTQENSDEYGVSQIFIAIEVDKLIDGATRDAKLQRIMDFITTAERADDNVAIRLPGHEFTKLLDDNRRHGITIDDSVWAKIQAL</sequence>
<feature type="chain" id="PRO_1000083851" description="2,3-diketo-L-gulonate reductase">
    <location>
        <begin position="1"/>
        <end position="332"/>
    </location>
</feature>
<feature type="active site" description="Proton donor" evidence="1">
    <location>
        <position position="44"/>
    </location>
</feature>
<feature type="binding site" evidence="1">
    <location>
        <begin position="168"/>
        <end position="174"/>
    </location>
    <ligand>
        <name>NAD(+)</name>
        <dbReference type="ChEBI" id="CHEBI:57540"/>
    </ligand>
</feature>
<feature type="binding site" evidence="1">
    <location>
        <begin position="224"/>
        <end position="225"/>
    </location>
    <ligand>
        <name>NAD(+)</name>
        <dbReference type="ChEBI" id="CHEBI:57540"/>
    </ligand>
</feature>
<feature type="binding site" evidence="1">
    <location>
        <begin position="304"/>
        <end position="306"/>
    </location>
    <ligand>
        <name>NAD(+)</name>
        <dbReference type="ChEBI" id="CHEBI:57540"/>
    </ligand>
</feature>
<dbReference type="EC" id="1.1.1.130" evidence="1"/>
<dbReference type="EMBL" id="CP000886">
    <property type="protein sequence ID" value="ABX69872.1"/>
    <property type="molecule type" value="Genomic_DNA"/>
</dbReference>
<dbReference type="SMR" id="A9MUW2"/>
<dbReference type="KEGG" id="spq:SPAB_04559"/>
<dbReference type="PATRIC" id="fig|1016998.12.peg.4287"/>
<dbReference type="HOGENOM" id="CLU_040452_4_0_6"/>
<dbReference type="BioCyc" id="SENT1016998:SPAB_RS18535-MONOMER"/>
<dbReference type="Proteomes" id="UP000008556">
    <property type="component" value="Chromosome"/>
</dbReference>
<dbReference type="GO" id="GO:0005737">
    <property type="term" value="C:cytoplasm"/>
    <property type="evidence" value="ECO:0007669"/>
    <property type="project" value="UniProtKB-SubCell"/>
</dbReference>
<dbReference type="GO" id="GO:0047559">
    <property type="term" value="F:3-dehydro-L-gulonate 2-dehydrogenase activity"/>
    <property type="evidence" value="ECO:0007669"/>
    <property type="project" value="UniProtKB-UniRule"/>
</dbReference>
<dbReference type="GO" id="GO:0070403">
    <property type="term" value="F:NAD+ binding"/>
    <property type="evidence" value="ECO:0007669"/>
    <property type="project" value="InterPro"/>
</dbReference>
<dbReference type="Gene3D" id="1.10.1530.10">
    <property type="match status" value="1"/>
</dbReference>
<dbReference type="Gene3D" id="3.30.1370.60">
    <property type="entry name" value="Hypothetical oxidoreductase yiak, domain 2"/>
    <property type="match status" value="1"/>
</dbReference>
<dbReference type="Gene3D" id="3.30.60.50">
    <property type="entry name" value="Hypothetical oxidoreductase yiak, domain 3"/>
    <property type="match status" value="1"/>
</dbReference>
<dbReference type="HAMAP" id="MF_00820">
    <property type="entry name" value="Diketo_gul_reduc"/>
    <property type="match status" value="1"/>
</dbReference>
<dbReference type="InterPro" id="IPR023689">
    <property type="entry name" value="Diketo_gul_Rdtase"/>
</dbReference>
<dbReference type="InterPro" id="IPR043144">
    <property type="entry name" value="Mal/L-sulf/L-lact_DH-like_ah"/>
</dbReference>
<dbReference type="InterPro" id="IPR043143">
    <property type="entry name" value="Mal/L-sulf/L-lact_DH-like_NADP"/>
</dbReference>
<dbReference type="InterPro" id="IPR036111">
    <property type="entry name" value="Mal/L-sulfo/L-lacto_DH-like_sf"/>
</dbReference>
<dbReference type="InterPro" id="IPR003767">
    <property type="entry name" value="Malate/L-lactate_DH-like"/>
</dbReference>
<dbReference type="NCBIfam" id="NF009750">
    <property type="entry name" value="PRK13260.1"/>
    <property type="match status" value="1"/>
</dbReference>
<dbReference type="PANTHER" id="PTHR11091:SF3">
    <property type="entry name" value="2,3-DIKETO-L-GULONATE REDUCTASE"/>
    <property type="match status" value="1"/>
</dbReference>
<dbReference type="PANTHER" id="PTHR11091">
    <property type="entry name" value="OXIDOREDUCTASE-RELATED"/>
    <property type="match status" value="1"/>
</dbReference>
<dbReference type="Pfam" id="PF02615">
    <property type="entry name" value="Ldh_2"/>
    <property type="match status" value="1"/>
</dbReference>
<dbReference type="SUPFAM" id="SSF89733">
    <property type="entry name" value="L-sulfolactate dehydrogenase-like"/>
    <property type="match status" value="1"/>
</dbReference>